<proteinExistence type="evidence at transcript level"/>
<feature type="signal peptide" evidence="2">
    <location>
        <begin position="1"/>
        <end position="28"/>
    </location>
</feature>
<feature type="chain" id="PRO_0000412879" description="Goannatyrotoxin-Vere1">
    <location>
        <begin position="29"/>
        <end position="64"/>
    </location>
</feature>
<feature type="propeptide" id="PRO_0000412880" description="C-terminal extension" evidence="1">
    <location>
        <begin position="68"/>
        <end position="99"/>
    </location>
</feature>
<feature type="modified residue" description="Tyrosine amide" evidence="1">
    <location>
        <position position="64"/>
    </location>
</feature>
<reference key="1">
    <citation type="journal article" date="2010" name="Mol. Cell. Proteomics">
        <title>Functional and structural diversification of the Anguimorpha lizard venom system.</title>
        <authorList>
            <person name="Fry B.G."/>
            <person name="Winter K."/>
            <person name="Norman J.A."/>
            <person name="Roelants K."/>
            <person name="Nabuurs R.J."/>
            <person name="van Osch M.J."/>
            <person name="Teeuwisse W.M."/>
            <person name="van der Weerd L."/>
            <person name="McNaughtan J.E."/>
            <person name="Kwok H.F."/>
            <person name="Scheib H."/>
            <person name="Greisman L."/>
            <person name="Kochva E."/>
            <person name="Miller L.J."/>
            <person name="Gao F."/>
            <person name="Karas J."/>
            <person name="Scanlon D."/>
            <person name="Lin F."/>
            <person name="Kuruppu S."/>
            <person name="Shaw C."/>
            <person name="Wong L."/>
            <person name="Hodgson W.C."/>
        </authorList>
    </citation>
    <scope>NUCLEOTIDE SEQUENCE [MRNA]</scope>
    <scope>SYNTHESIS OF 29-64</scope>
    <scope>FUNCTION</scope>
    <source>
        <tissue>Venom gland</tissue>
    </source>
</reference>
<protein>
    <recommendedName>
        <fullName>Goannatyrotoxin-Vere1</fullName>
    </recommendedName>
    <alternativeName>
        <fullName>Venom peptide YY-like</fullName>
    </alternativeName>
</protein>
<organism>
    <name type="scientific">Varanus eremius</name>
    <name type="common">Rusty desert monitor</name>
    <dbReference type="NCBI Taxonomy" id="62040"/>
    <lineage>
        <taxon>Eukaryota</taxon>
        <taxon>Metazoa</taxon>
        <taxon>Chordata</taxon>
        <taxon>Craniata</taxon>
        <taxon>Vertebrata</taxon>
        <taxon>Euteleostomi</taxon>
        <taxon>Lepidosauria</taxon>
        <taxon>Squamata</taxon>
        <taxon>Bifurcata</taxon>
        <taxon>Unidentata</taxon>
        <taxon>Episquamata</taxon>
        <taxon>Toxicofera</taxon>
        <taxon>Anguimorpha</taxon>
        <taxon>Paleoanguimorpha</taxon>
        <taxon>Varanoidea</taxon>
        <taxon>Varanidae</taxon>
        <taxon>Varanus</taxon>
    </lineage>
</organism>
<name>PYYV_VARER</name>
<sequence length="99" mass="11283">MIASMKPWPLVMVAALCILFCLGTLVDAYPTKPESPGPDATPEELAEYMTKIRQYINLVTRQRYGKRSSPETLMSELIFGENSNSDHSSRSRFDDSYMW</sequence>
<accession>E2E4L2</accession>
<dbReference type="EMBL" id="GU441529">
    <property type="protein sequence ID" value="ADK39293.1"/>
    <property type="molecule type" value="mRNA"/>
</dbReference>
<dbReference type="TCDB" id="8.A.106.2.2">
    <property type="family name" value="the caltrin/peptide yy (caltrin) family"/>
</dbReference>
<dbReference type="GO" id="GO:0005615">
    <property type="term" value="C:extracellular space"/>
    <property type="evidence" value="ECO:0007669"/>
    <property type="project" value="TreeGrafter"/>
</dbReference>
<dbReference type="GO" id="GO:0005184">
    <property type="term" value="F:neuropeptide hormone activity"/>
    <property type="evidence" value="ECO:0007669"/>
    <property type="project" value="TreeGrafter"/>
</dbReference>
<dbReference type="GO" id="GO:0031841">
    <property type="term" value="F:neuropeptide Y receptor binding"/>
    <property type="evidence" value="ECO:0007669"/>
    <property type="project" value="TreeGrafter"/>
</dbReference>
<dbReference type="GO" id="GO:0090729">
    <property type="term" value="F:toxin activity"/>
    <property type="evidence" value="ECO:0007669"/>
    <property type="project" value="UniProtKB-KW"/>
</dbReference>
<dbReference type="GO" id="GO:0007631">
    <property type="term" value="P:feeding behavior"/>
    <property type="evidence" value="ECO:0007669"/>
    <property type="project" value="TreeGrafter"/>
</dbReference>
<dbReference type="GO" id="GO:0007218">
    <property type="term" value="P:neuropeptide signaling pathway"/>
    <property type="evidence" value="ECO:0007669"/>
    <property type="project" value="TreeGrafter"/>
</dbReference>
<dbReference type="GO" id="GO:0008217">
    <property type="term" value="P:regulation of blood pressure"/>
    <property type="evidence" value="ECO:0007669"/>
    <property type="project" value="UniProtKB-KW"/>
</dbReference>
<dbReference type="CDD" id="cd00126">
    <property type="entry name" value="PAH"/>
    <property type="match status" value="1"/>
</dbReference>
<dbReference type="Gene3D" id="6.10.250.900">
    <property type="match status" value="1"/>
</dbReference>
<dbReference type="InterPro" id="IPR001955">
    <property type="entry name" value="Pancreatic_hormone-like"/>
</dbReference>
<dbReference type="InterPro" id="IPR020392">
    <property type="entry name" value="Pancreatic_hormone-like_CS"/>
</dbReference>
<dbReference type="PANTHER" id="PTHR10533">
    <property type="entry name" value="NEUROPEPTIDE Y/PANCREATIC HORMONE/PEPTIDE YY"/>
    <property type="match status" value="1"/>
</dbReference>
<dbReference type="PANTHER" id="PTHR10533:SF14">
    <property type="entry name" value="PEPTIDE YY-RELATED"/>
    <property type="match status" value="1"/>
</dbReference>
<dbReference type="Pfam" id="PF00159">
    <property type="entry name" value="Hormone_3"/>
    <property type="match status" value="1"/>
</dbReference>
<dbReference type="PRINTS" id="PR00278">
    <property type="entry name" value="PANCHORMONE"/>
</dbReference>
<dbReference type="SMART" id="SM00309">
    <property type="entry name" value="PAH"/>
    <property type="match status" value="1"/>
</dbReference>
<dbReference type="PROSITE" id="PS00265">
    <property type="entry name" value="PANCREATIC_HORMONE_1"/>
    <property type="match status" value="1"/>
</dbReference>
<dbReference type="PROSITE" id="PS50276">
    <property type="entry name" value="PANCREATIC_HORMONE_2"/>
    <property type="match status" value="1"/>
</dbReference>
<comment type="function">
    <text evidence="3">Shows a potent unique triphasic action, rapid biphasic hypertension followed by prolonged hypotension.</text>
</comment>
<comment type="subcellular location">
    <subcellularLocation>
        <location evidence="1">Secreted</location>
    </subcellularLocation>
</comment>
<comment type="tissue specificity">
    <text>Expressed by the mandibular venom gland.</text>
</comment>
<comment type="similarity">
    <text evidence="4">Belongs to the NPY family.</text>
</comment>
<evidence type="ECO:0000250" key="1"/>
<evidence type="ECO:0000255" key="2"/>
<evidence type="ECO:0000269" key="3">
    <source>
    </source>
</evidence>
<evidence type="ECO:0000305" key="4"/>
<keyword id="KW-0027">Amidation</keyword>
<keyword id="KW-0165">Cleavage on pair of basic residues</keyword>
<keyword id="KW-0382">Hypotensive agent</keyword>
<keyword id="KW-0528">Neurotoxin</keyword>
<keyword id="KW-0964">Secreted</keyword>
<keyword id="KW-0732">Signal</keyword>
<keyword id="KW-0800">Toxin</keyword>